<evidence type="ECO:0000255" key="1">
    <source>
        <dbReference type="HAMAP-Rule" id="MF_00476"/>
    </source>
</evidence>
<sequence length="133" mass="15440">MSAEKISISLPKELYRELEDFITRKGIPDRSKIFQIALRNYLDENREGTEIIYGIINLVYDHEEASEALTEIQHEYKDNIISTLHLHVNERLCIEAIAVKGEKSKLVELNNRLGQIRGILKARLLISFPYEKT</sequence>
<comment type="function">
    <text evidence="1">Transcriptional regulator.</text>
</comment>
<comment type="cofactor">
    <cofactor evidence="1">
        <name>Ni(2+)</name>
        <dbReference type="ChEBI" id="CHEBI:49786"/>
    </cofactor>
    <text evidence="1">Binds 1 nickel ion per subunit.</text>
</comment>
<comment type="similarity">
    <text evidence="1">Belongs to the transcriptional regulatory CopG/NikR family.</text>
</comment>
<protein>
    <recommendedName>
        <fullName evidence="1">Putative nickel-responsive regulator</fullName>
    </recommendedName>
</protein>
<gene>
    <name type="ordered locus">YN1551_1355</name>
</gene>
<reference key="1">
    <citation type="journal article" date="2009" name="Proc. Natl. Acad. Sci. U.S.A.">
        <title>Biogeography of the Sulfolobus islandicus pan-genome.</title>
        <authorList>
            <person name="Reno M.L."/>
            <person name="Held N.L."/>
            <person name="Fields C.J."/>
            <person name="Burke P.V."/>
            <person name="Whitaker R.J."/>
        </authorList>
    </citation>
    <scope>NUCLEOTIDE SEQUENCE [LARGE SCALE GENOMIC DNA]</scope>
    <source>
        <strain>Y.N.15.51 / Yellowstone #2</strain>
    </source>
</reference>
<feature type="chain" id="PRO_1000206385" description="Putative nickel-responsive regulator">
    <location>
        <begin position="1"/>
        <end position="133"/>
    </location>
</feature>
<feature type="binding site" evidence="1">
    <location>
        <position position="74"/>
    </location>
    <ligand>
        <name>Ni(2+)</name>
        <dbReference type="ChEBI" id="CHEBI:49786"/>
    </ligand>
</feature>
<feature type="binding site" evidence="1">
    <location>
        <position position="85"/>
    </location>
    <ligand>
        <name>Ni(2+)</name>
        <dbReference type="ChEBI" id="CHEBI:49786"/>
    </ligand>
</feature>
<feature type="binding site" evidence="1">
    <location>
        <position position="87"/>
    </location>
    <ligand>
        <name>Ni(2+)</name>
        <dbReference type="ChEBI" id="CHEBI:49786"/>
    </ligand>
</feature>
<feature type="binding site" evidence="1">
    <location>
        <position position="93"/>
    </location>
    <ligand>
        <name>Ni(2+)</name>
        <dbReference type="ChEBI" id="CHEBI:49786"/>
    </ligand>
</feature>
<keyword id="KW-0238">DNA-binding</keyword>
<keyword id="KW-0479">Metal-binding</keyword>
<keyword id="KW-0533">Nickel</keyword>
<keyword id="KW-0804">Transcription</keyword>
<keyword id="KW-0805">Transcription regulation</keyword>
<proteinExistence type="inferred from homology"/>
<name>NIKR_SACI1</name>
<accession>C3NH39</accession>
<dbReference type="EMBL" id="CP001404">
    <property type="protein sequence ID" value="ACP48449.1"/>
    <property type="molecule type" value="Genomic_DNA"/>
</dbReference>
<dbReference type="RefSeq" id="WP_012711473.1">
    <property type="nucleotide sequence ID" value="NC_012623.1"/>
</dbReference>
<dbReference type="SMR" id="C3NH39"/>
<dbReference type="KEGG" id="sin:YN1551_1355"/>
<dbReference type="HOGENOM" id="CLU_113319_2_1_2"/>
<dbReference type="Proteomes" id="UP000006818">
    <property type="component" value="Chromosome"/>
</dbReference>
<dbReference type="GO" id="GO:0003677">
    <property type="term" value="F:DNA binding"/>
    <property type="evidence" value="ECO:0007669"/>
    <property type="project" value="UniProtKB-KW"/>
</dbReference>
<dbReference type="GO" id="GO:0003700">
    <property type="term" value="F:DNA-binding transcription factor activity"/>
    <property type="evidence" value="ECO:0007669"/>
    <property type="project" value="UniProtKB-UniRule"/>
</dbReference>
<dbReference type="GO" id="GO:0016151">
    <property type="term" value="F:nickel cation binding"/>
    <property type="evidence" value="ECO:0007669"/>
    <property type="project" value="UniProtKB-UniRule"/>
</dbReference>
<dbReference type="GO" id="GO:0010045">
    <property type="term" value="P:response to nickel cation"/>
    <property type="evidence" value="ECO:0007669"/>
    <property type="project" value="InterPro"/>
</dbReference>
<dbReference type="CDD" id="cd22231">
    <property type="entry name" value="RHH_NikR_HicB-like"/>
    <property type="match status" value="1"/>
</dbReference>
<dbReference type="Gene3D" id="3.30.70.1150">
    <property type="entry name" value="ACT-like. Chain A, domain 2"/>
    <property type="match status" value="1"/>
</dbReference>
<dbReference type="Gene3D" id="1.10.1220.10">
    <property type="entry name" value="Met repressor-like"/>
    <property type="match status" value="1"/>
</dbReference>
<dbReference type="HAMAP" id="MF_00476">
    <property type="entry name" value="NikR"/>
    <property type="match status" value="1"/>
</dbReference>
<dbReference type="InterPro" id="IPR027271">
    <property type="entry name" value="Acetolactate_synth/TF_NikR_C"/>
</dbReference>
<dbReference type="InterPro" id="IPR045865">
    <property type="entry name" value="ACT-like_dom_sf"/>
</dbReference>
<dbReference type="InterPro" id="IPR013321">
    <property type="entry name" value="Arc_rbn_hlx_hlx"/>
</dbReference>
<dbReference type="InterPro" id="IPR002145">
    <property type="entry name" value="CopG"/>
</dbReference>
<dbReference type="InterPro" id="IPR050192">
    <property type="entry name" value="CopG/NikR_regulator"/>
</dbReference>
<dbReference type="InterPro" id="IPR022988">
    <property type="entry name" value="Ni_resp_reg_NikR"/>
</dbReference>
<dbReference type="InterPro" id="IPR010985">
    <property type="entry name" value="Ribbon_hlx_hlx"/>
</dbReference>
<dbReference type="InterPro" id="IPR014864">
    <property type="entry name" value="TF_NikR_Ni-bd_C"/>
</dbReference>
<dbReference type="PANTHER" id="PTHR34719">
    <property type="entry name" value="NICKEL-RESPONSIVE REGULATOR"/>
    <property type="match status" value="1"/>
</dbReference>
<dbReference type="PANTHER" id="PTHR34719:SF2">
    <property type="entry name" value="NICKEL-RESPONSIVE REGULATOR"/>
    <property type="match status" value="1"/>
</dbReference>
<dbReference type="Pfam" id="PF08753">
    <property type="entry name" value="NikR_C"/>
    <property type="match status" value="1"/>
</dbReference>
<dbReference type="Pfam" id="PF01402">
    <property type="entry name" value="RHH_1"/>
    <property type="match status" value="1"/>
</dbReference>
<dbReference type="SUPFAM" id="SSF55021">
    <property type="entry name" value="ACT-like"/>
    <property type="match status" value="1"/>
</dbReference>
<dbReference type="SUPFAM" id="SSF47598">
    <property type="entry name" value="Ribbon-helix-helix"/>
    <property type="match status" value="1"/>
</dbReference>
<organism>
    <name type="scientific">Saccharolobus islandicus (strain Y.N.15.51 / Yellowstone #2)</name>
    <name type="common">Sulfolobus islandicus</name>
    <dbReference type="NCBI Taxonomy" id="419942"/>
    <lineage>
        <taxon>Archaea</taxon>
        <taxon>Thermoproteota</taxon>
        <taxon>Thermoprotei</taxon>
        <taxon>Sulfolobales</taxon>
        <taxon>Sulfolobaceae</taxon>
        <taxon>Saccharolobus</taxon>
    </lineage>
</organism>